<sequence>MSARDGNTASEWVPTGSVTVRVPGKVNLYLDVGDRRDDGYHELTTVFHAVSLLDEVTVRTADILSLEMTGEGAESLPTDERNLAWRAAELMADHVGRSPDVAISIEKTIPVAGGMAGGSADAAAVLVAMNSLWELGVPRRDLHALAAQLGSDVPFALHGGTALGTGRGEELATVLTRNTFHWVLAFSPGGLSTAKVFAEIDRLRAEEDRTLPPRLESPEPVLAALASGDPAQLAPLLGNDLQPAALSLDSTLRRTLRAGVDAGALAGVVSGSGPTCAFLCGSAGAAVDVGTELAGAGVCRTVRVASGPVQGARVVPSPSNAG</sequence>
<gene>
    <name evidence="1" type="primary">ispE</name>
    <name type="ordered locus">Mvan_4799</name>
</gene>
<reference key="1">
    <citation type="submission" date="2006-12" db="EMBL/GenBank/DDBJ databases">
        <title>Complete sequence of Mycobacterium vanbaalenii PYR-1.</title>
        <authorList>
            <consortium name="US DOE Joint Genome Institute"/>
            <person name="Copeland A."/>
            <person name="Lucas S."/>
            <person name="Lapidus A."/>
            <person name="Barry K."/>
            <person name="Detter J.C."/>
            <person name="Glavina del Rio T."/>
            <person name="Hammon N."/>
            <person name="Israni S."/>
            <person name="Dalin E."/>
            <person name="Tice H."/>
            <person name="Pitluck S."/>
            <person name="Singan V."/>
            <person name="Schmutz J."/>
            <person name="Larimer F."/>
            <person name="Land M."/>
            <person name="Hauser L."/>
            <person name="Kyrpides N."/>
            <person name="Anderson I.J."/>
            <person name="Miller C."/>
            <person name="Richardson P."/>
        </authorList>
    </citation>
    <scope>NUCLEOTIDE SEQUENCE [LARGE SCALE GENOMIC DNA]</scope>
    <source>
        <strain>DSM 7251 / JCM 13017 / BCRC 16820 / KCTC 9966 / NRRL B-24157 / PYR-1</strain>
    </source>
</reference>
<dbReference type="EC" id="2.7.1.148" evidence="1"/>
<dbReference type="EMBL" id="CP000511">
    <property type="protein sequence ID" value="ABM15572.1"/>
    <property type="molecule type" value="Genomic_DNA"/>
</dbReference>
<dbReference type="RefSeq" id="WP_011781946.1">
    <property type="nucleotide sequence ID" value="NZ_JACKSD010000356.1"/>
</dbReference>
<dbReference type="SMR" id="A1TEH2"/>
<dbReference type="STRING" id="350058.Mvan_4799"/>
<dbReference type="KEGG" id="mva:Mvan_4799"/>
<dbReference type="eggNOG" id="COG1947">
    <property type="taxonomic scope" value="Bacteria"/>
</dbReference>
<dbReference type="HOGENOM" id="CLU_053057_1_1_11"/>
<dbReference type="UniPathway" id="UPA00056">
    <property type="reaction ID" value="UER00094"/>
</dbReference>
<dbReference type="Proteomes" id="UP000009159">
    <property type="component" value="Chromosome"/>
</dbReference>
<dbReference type="GO" id="GO:0050515">
    <property type="term" value="F:4-(cytidine 5'-diphospho)-2-C-methyl-D-erythritol kinase activity"/>
    <property type="evidence" value="ECO:0007669"/>
    <property type="project" value="UniProtKB-UniRule"/>
</dbReference>
<dbReference type="GO" id="GO:0005524">
    <property type="term" value="F:ATP binding"/>
    <property type="evidence" value="ECO:0007669"/>
    <property type="project" value="UniProtKB-UniRule"/>
</dbReference>
<dbReference type="GO" id="GO:0019288">
    <property type="term" value="P:isopentenyl diphosphate biosynthetic process, methylerythritol 4-phosphate pathway"/>
    <property type="evidence" value="ECO:0007669"/>
    <property type="project" value="UniProtKB-UniRule"/>
</dbReference>
<dbReference type="GO" id="GO:0016114">
    <property type="term" value="P:terpenoid biosynthetic process"/>
    <property type="evidence" value="ECO:0007669"/>
    <property type="project" value="InterPro"/>
</dbReference>
<dbReference type="Gene3D" id="3.30.230.10">
    <property type="match status" value="1"/>
</dbReference>
<dbReference type="Gene3D" id="3.30.70.890">
    <property type="entry name" value="GHMP kinase, C-terminal domain"/>
    <property type="match status" value="1"/>
</dbReference>
<dbReference type="HAMAP" id="MF_00061">
    <property type="entry name" value="IspE"/>
    <property type="match status" value="1"/>
</dbReference>
<dbReference type="InterPro" id="IPR013750">
    <property type="entry name" value="GHMP_kinase_C_dom"/>
</dbReference>
<dbReference type="InterPro" id="IPR036554">
    <property type="entry name" value="GHMP_kinase_C_sf"/>
</dbReference>
<dbReference type="InterPro" id="IPR006204">
    <property type="entry name" value="GHMP_kinase_N_dom"/>
</dbReference>
<dbReference type="InterPro" id="IPR004424">
    <property type="entry name" value="IspE"/>
</dbReference>
<dbReference type="InterPro" id="IPR020568">
    <property type="entry name" value="Ribosomal_Su5_D2-typ_SF"/>
</dbReference>
<dbReference type="InterPro" id="IPR014721">
    <property type="entry name" value="Ribsml_uS5_D2-typ_fold_subgr"/>
</dbReference>
<dbReference type="NCBIfam" id="TIGR00154">
    <property type="entry name" value="ispE"/>
    <property type="match status" value="1"/>
</dbReference>
<dbReference type="NCBIfam" id="NF002870">
    <property type="entry name" value="PRK03188.1"/>
    <property type="match status" value="1"/>
</dbReference>
<dbReference type="PANTHER" id="PTHR43527">
    <property type="entry name" value="4-DIPHOSPHOCYTIDYL-2-C-METHYL-D-ERYTHRITOL KINASE, CHLOROPLASTIC"/>
    <property type="match status" value="1"/>
</dbReference>
<dbReference type="PANTHER" id="PTHR43527:SF2">
    <property type="entry name" value="4-DIPHOSPHOCYTIDYL-2-C-METHYL-D-ERYTHRITOL KINASE, CHLOROPLASTIC"/>
    <property type="match status" value="1"/>
</dbReference>
<dbReference type="Pfam" id="PF08544">
    <property type="entry name" value="GHMP_kinases_C"/>
    <property type="match status" value="1"/>
</dbReference>
<dbReference type="Pfam" id="PF00288">
    <property type="entry name" value="GHMP_kinases_N"/>
    <property type="match status" value="1"/>
</dbReference>
<dbReference type="PIRSF" id="PIRSF010376">
    <property type="entry name" value="IspE"/>
    <property type="match status" value="1"/>
</dbReference>
<dbReference type="SUPFAM" id="SSF55060">
    <property type="entry name" value="GHMP Kinase, C-terminal domain"/>
    <property type="match status" value="1"/>
</dbReference>
<dbReference type="SUPFAM" id="SSF54211">
    <property type="entry name" value="Ribosomal protein S5 domain 2-like"/>
    <property type="match status" value="1"/>
</dbReference>
<proteinExistence type="inferred from homology"/>
<feature type="chain" id="PRO_0000335731" description="4-diphosphocytidyl-2-C-methyl-D-erythritol kinase">
    <location>
        <begin position="1"/>
        <end position="322"/>
    </location>
</feature>
<feature type="active site" evidence="1">
    <location>
        <position position="25"/>
    </location>
</feature>
<feature type="active site" evidence="1">
    <location>
        <position position="152"/>
    </location>
</feature>
<feature type="binding site" evidence="1">
    <location>
        <begin position="110"/>
        <end position="120"/>
    </location>
    <ligand>
        <name>ATP</name>
        <dbReference type="ChEBI" id="CHEBI:30616"/>
    </ligand>
</feature>
<organism>
    <name type="scientific">Mycolicibacterium vanbaalenii (strain DSM 7251 / JCM 13017 / BCRC 16820 / KCTC 9966 / NRRL B-24157 / PYR-1)</name>
    <name type="common">Mycobacterium vanbaalenii</name>
    <dbReference type="NCBI Taxonomy" id="350058"/>
    <lineage>
        <taxon>Bacteria</taxon>
        <taxon>Bacillati</taxon>
        <taxon>Actinomycetota</taxon>
        <taxon>Actinomycetes</taxon>
        <taxon>Mycobacteriales</taxon>
        <taxon>Mycobacteriaceae</taxon>
        <taxon>Mycolicibacterium</taxon>
    </lineage>
</organism>
<evidence type="ECO:0000255" key="1">
    <source>
        <dbReference type="HAMAP-Rule" id="MF_00061"/>
    </source>
</evidence>
<accession>A1TEH2</accession>
<comment type="function">
    <text evidence="1">Catalyzes the phosphorylation of the position 2 hydroxy group of 4-diphosphocytidyl-2C-methyl-D-erythritol.</text>
</comment>
<comment type="catalytic activity">
    <reaction evidence="1">
        <text>4-CDP-2-C-methyl-D-erythritol + ATP = 4-CDP-2-C-methyl-D-erythritol 2-phosphate + ADP + H(+)</text>
        <dbReference type="Rhea" id="RHEA:18437"/>
        <dbReference type="ChEBI" id="CHEBI:15378"/>
        <dbReference type="ChEBI" id="CHEBI:30616"/>
        <dbReference type="ChEBI" id="CHEBI:57823"/>
        <dbReference type="ChEBI" id="CHEBI:57919"/>
        <dbReference type="ChEBI" id="CHEBI:456216"/>
        <dbReference type="EC" id="2.7.1.148"/>
    </reaction>
</comment>
<comment type="pathway">
    <text evidence="1">Isoprenoid biosynthesis; isopentenyl diphosphate biosynthesis via DXP pathway; isopentenyl diphosphate from 1-deoxy-D-xylulose 5-phosphate: step 3/6.</text>
</comment>
<comment type="similarity">
    <text evidence="1">Belongs to the GHMP kinase family. IspE subfamily.</text>
</comment>
<protein>
    <recommendedName>
        <fullName evidence="1">4-diphosphocytidyl-2-C-methyl-D-erythritol kinase</fullName>
        <shortName evidence="1">CMK</shortName>
        <ecNumber evidence="1">2.7.1.148</ecNumber>
    </recommendedName>
    <alternativeName>
        <fullName evidence="1">4-(cytidine-5'-diphospho)-2-C-methyl-D-erythritol kinase</fullName>
    </alternativeName>
</protein>
<keyword id="KW-0067">ATP-binding</keyword>
<keyword id="KW-0414">Isoprene biosynthesis</keyword>
<keyword id="KW-0418">Kinase</keyword>
<keyword id="KW-0547">Nucleotide-binding</keyword>
<keyword id="KW-0808">Transferase</keyword>
<name>ISPE_MYCVP</name>